<name>RL3_ZYMMO</name>
<feature type="chain" id="PRO_0000241436" description="Large ribosomal subunit protein uL3">
    <location>
        <begin position="1"/>
        <end position="242"/>
    </location>
</feature>
<feature type="modified residue" description="N5-methylglutamine" evidence="1">
    <location>
        <position position="151"/>
    </location>
</feature>
<protein>
    <recommendedName>
        <fullName evidence="1">Large ribosomal subunit protein uL3</fullName>
    </recommendedName>
    <alternativeName>
        <fullName evidence="2">50S ribosomal protein L3</fullName>
    </alternativeName>
</protein>
<comment type="function">
    <text evidence="1">One of the primary rRNA binding proteins, it binds directly near the 3'-end of the 23S rRNA, where it nucleates assembly of the 50S subunit.</text>
</comment>
<comment type="subunit">
    <text evidence="1">Part of the 50S ribosomal subunit. Forms a cluster with proteins L14 and L19.</text>
</comment>
<comment type="PTM">
    <text evidence="1">Methylated by PrmB.</text>
</comment>
<comment type="similarity">
    <text evidence="1">Belongs to the universal ribosomal protein uL3 family.</text>
</comment>
<dbReference type="EMBL" id="AE008692">
    <property type="protein sequence ID" value="AAV89141.1"/>
    <property type="molecule type" value="Genomic_DNA"/>
</dbReference>
<dbReference type="RefSeq" id="WP_011240423.1">
    <property type="nucleotide sequence ID" value="NZ_CP035711.1"/>
</dbReference>
<dbReference type="SMR" id="Q5NQ64"/>
<dbReference type="STRING" id="264203.ZMO0517"/>
<dbReference type="GeneID" id="79904292"/>
<dbReference type="KEGG" id="zmo:ZMO0517"/>
<dbReference type="eggNOG" id="COG0087">
    <property type="taxonomic scope" value="Bacteria"/>
</dbReference>
<dbReference type="HOGENOM" id="CLU_044142_2_0_5"/>
<dbReference type="Proteomes" id="UP000001173">
    <property type="component" value="Chromosome"/>
</dbReference>
<dbReference type="GO" id="GO:0022625">
    <property type="term" value="C:cytosolic large ribosomal subunit"/>
    <property type="evidence" value="ECO:0007669"/>
    <property type="project" value="TreeGrafter"/>
</dbReference>
<dbReference type="GO" id="GO:0019843">
    <property type="term" value="F:rRNA binding"/>
    <property type="evidence" value="ECO:0007669"/>
    <property type="project" value="UniProtKB-UniRule"/>
</dbReference>
<dbReference type="GO" id="GO:0003735">
    <property type="term" value="F:structural constituent of ribosome"/>
    <property type="evidence" value="ECO:0007669"/>
    <property type="project" value="InterPro"/>
</dbReference>
<dbReference type="GO" id="GO:0006412">
    <property type="term" value="P:translation"/>
    <property type="evidence" value="ECO:0007669"/>
    <property type="project" value="UniProtKB-UniRule"/>
</dbReference>
<dbReference type="FunFam" id="2.40.30.10:FF:000004">
    <property type="entry name" value="50S ribosomal protein L3"/>
    <property type="match status" value="1"/>
</dbReference>
<dbReference type="FunFam" id="3.30.160.810:FF:000001">
    <property type="entry name" value="50S ribosomal protein L3"/>
    <property type="match status" value="1"/>
</dbReference>
<dbReference type="Gene3D" id="3.30.160.810">
    <property type="match status" value="1"/>
</dbReference>
<dbReference type="Gene3D" id="2.40.30.10">
    <property type="entry name" value="Translation factors"/>
    <property type="match status" value="1"/>
</dbReference>
<dbReference type="HAMAP" id="MF_01325_B">
    <property type="entry name" value="Ribosomal_uL3_B"/>
    <property type="match status" value="1"/>
</dbReference>
<dbReference type="InterPro" id="IPR000597">
    <property type="entry name" value="Ribosomal_uL3"/>
</dbReference>
<dbReference type="InterPro" id="IPR019927">
    <property type="entry name" value="Ribosomal_uL3_bac/org-type"/>
</dbReference>
<dbReference type="InterPro" id="IPR019926">
    <property type="entry name" value="Ribosomal_uL3_CS"/>
</dbReference>
<dbReference type="InterPro" id="IPR009000">
    <property type="entry name" value="Transl_B-barrel_sf"/>
</dbReference>
<dbReference type="NCBIfam" id="TIGR03625">
    <property type="entry name" value="L3_bact"/>
    <property type="match status" value="1"/>
</dbReference>
<dbReference type="PANTHER" id="PTHR11229">
    <property type="entry name" value="50S RIBOSOMAL PROTEIN L3"/>
    <property type="match status" value="1"/>
</dbReference>
<dbReference type="PANTHER" id="PTHR11229:SF16">
    <property type="entry name" value="LARGE RIBOSOMAL SUBUNIT PROTEIN UL3C"/>
    <property type="match status" value="1"/>
</dbReference>
<dbReference type="Pfam" id="PF00297">
    <property type="entry name" value="Ribosomal_L3"/>
    <property type="match status" value="1"/>
</dbReference>
<dbReference type="SUPFAM" id="SSF50447">
    <property type="entry name" value="Translation proteins"/>
    <property type="match status" value="1"/>
</dbReference>
<dbReference type="PROSITE" id="PS00474">
    <property type="entry name" value="RIBOSOMAL_L3"/>
    <property type="match status" value="1"/>
</dbReference>
<gene>
    <name evidence="1" type="primary">rplC</name>
    <name type="ordered locus">ZMO0517</name>
</gene>
<accession>Q5NQ64</accession>
<keyword id="KW-0488">Methylation</keyword>
<keyword id="KW-1185">Reference proteome</keyword>
<keyword id="KW-0687">Ribonucleoprotein</keyword>
<keyword id="KW-0689">Ribosomal protein</keyword>
<keyword id="KW-0694">RNA-binding</keyword>
<keyword id="KW-0699">rRNA-binding</keyword>
<organism>
    <name type="scientific">Zymomonas mobilis subsp. mobilis (strain ATCC 31821 / ZM4 / CP4)</name>
    <dbReference type="NCBI Taxonomy" id="264203"/>
    <lineage>
        <taxon>Bacteria</taxon>
        <taxon>Pseudomonadati</taxon>
        <taxon>Pseudomonadota</taxon>
        <taxon>Alphaproteobacteria</taxon>
        <taxon>Sphingomonadales</taxon>
        <taxon>Zymomonadaceae</taxon>
        <taxon>Zymomonas</taxon>
    </lineage>
</organism>
<evidence type="ECO:0000255" key="1">
    <source>
        <dbReference type="HAMAP-Rule" id="MF_01325"/>
    </source>
</evidence>
<evidence type="ECO:0000305" key="2"/>
<sequence length="242" mass="25650">MRTGVIAKKVGMTRLFQEDGRHVPVTVLKLEDVQVVAVKNKDQDGYVAVQLGAGSAKAKNVTKPVRGHFAKAEVELKAKLVEFPVSEDAVLEVGTSISADHFIAGQLVDISGQTQGKGFAGAMKRWGFGGLRATHGVSLSHRSHGSTGNRQDPGRVFKNKKMAGHMGARQRTQQNLEVISTDAERDLIFVRGSVPGSKGAWLIIRDAVKVARPTDAPYPAAIKAANGNEAPAAPVAAEGQEG</sequence>
<reference key="1">
    <citation type="journal article" date="2005" name="Nat. Biotechnol.">
        <title>The genome sequence of the ethanologenic bacterium Zymomonas mobilis ZM4.</title>
        <authorList>
            <person name="Seo J.-S."/>
            <person name="Chong H."/>
            <person name="Park H.S."/>
            <person name="Yoon K.-O."/>
            <person name="Jung C."/>
            <person name="Kim J.J."/>
            <person name="Hong J.H."/>
            <person name="Kim H."/>
            <person name="Kim J.-H."/>
            <person name="Kil J.-I."/>
            <person name="Park C.J."/>
            <person name="Oh H.-M."/>
            <person name="Lee J.-S."/>
            <person name="Jin S.-J."/>
            <person name="Um H.-W."/>
            <person name="Lee H.-J."/>
            <person name="Oh S.-J."/>
            <person name="Kim J.Y."/>
            <person name="Kang H.L."/>
            <person name="Lee S.Y."/>
            <person name="Lee K.J."/>
            <person name="Kang H.S."/>
        </authorList>
    </citation>
    <scope>NUCLEOTIDE SEQUENCE [LARGE SCALE GENOMIC DNA]</scope>
    <source>
        <strain>ATCC 31821 / ZM4 / CP4</strain>
    </source>
</reference>
<proteinExistence type="inferred from homology"/>